<keyword id="KW-0010">Activator</keyword>
<keyword id="KW-0158">Chromosome</keyword>
<keyword id="KW-0539">Nucleus</keyword>
<keyword id="KW-1185">Reference proteome</keyword>
<keyword id="KW-0779">Telomere</keyword>
<keyword id="KW-0804">Transcription</keyword>
<keyword id="KW-0805">Transcription regulation</keyword>
<keyword id="KW-0819">tRNA processing</keyword>
<name>PCC1_DEBHA</name>
<organism>
    <name type="scientific">Debaryomyces hansenii (strain ATCC 36239 / CBS 767 / BCRC 21394 / JCM 1990 / NBRC 0083 / IGC 2968)</name>
    <name type="common">Yeast</name>
    <name type="synonym">Torulaspora hansenii</name>
    <dbReference type="NCBI Taxonomy" id="284592"/>
    <lineage>
        <taxon>Eukaryota</taxon>
        <taxon>Fungi</taxon>
        <taxon>Dikarya</taxon>
        <taxon>Ascomycota</taxon>
        <taxon>Saccharomycotina</taxon>
        <taxon>Pichiomycetes</taxon>
        <taxon>Debaryomycetaceae</taxon>
        <taxon>Debaryomyces</taxon>
    </lineage>
</organism>
<protein>
    <recommendedName>
        <fullName>EKC/KEOPS complex subunit PCC1</fullName>
    </recommendedName>
</protein>
<evidence type="ECO:0000250" key="1"/>
<evidence type="ECO:0000305" key="2"/>
<proteinExistence type="inferred from homology"/>
<sequence length="100" mass="11088">MTTQTITDEKLSHQVSINIPFESEKQASIACNSLSPDLILRSTELSVSCRSSDRNLICEFSGSSDRVIRVAISSVIDNLKTIIECMDEFDAKEDVIFTEA</sequence>
<comment type="function">
    <text evidence="1">Component of the EKC/KEOPS complex that is required for the formation of a threonylcarbamoyl group on adenosine at position 37 (t(6)A37) in tRNAs that read codons beginning with adenine. The complex is probably involved in the transfer of the threonylcarbamoyl moiety of threonylcarbamoyl-AMP (TC-AMP) to the N6 group of A37. PCC1 functions as a dimerization module for the complex. The EKC/KEOPS complex also promotes both telomere uncapping and telomere elongation. The complex is required for efficient recruitment of transcriptional coactivators (By similarity).</text>
</comment>
<comment type="subunit">
    <text evidence="1">Component of the EKC/KEOPS complex composed of at least BUD32, CGI121, GON7, KAE1 and PCC1; the whole complex dimerizes.</text>
</comment>
<comment type="subcellular location">
    <subcellularLocation>
        <location evidence="1">Nucleus</location>
    </subcellularLocation>
    <subcellularLocation>
        <location evidence="1">Chromosome</location>
        <location evidence="1">Telomere</location>
    </subcellularLocation>
</comment>
<comment type="similarity">
    <text evidence="2">Belongs to the CTAG/PCC1 family.</text>
</comment>
<gene>
    <name type="primary">PCC1</name>
    <name type="ordered locus">DEHA2E18964g</name>
</gene>
<feature type="chain" id="PRO_0000278943" description="EKC/KEOPS complex subunit PCC1">
    <location>
        <begin position="1"/>
        <end position="100"/>
    </location>
</feature>
<reference key="1">
    <citation type="journal article" date="2004" name="Nature">
        <title>Genome evolution in yeasts.</title>
        <authorList>
            <person name="Dujon B."/>
            <person name="Sherman D."/>
            <person name="Fischer G."/>
            <person name="Durrens P."/>
            <person name="Casaregola S."/>
            <person name="Lafontaine I."/>
            <person name="de Montigny J."/>
            <person name="Marck C."/>
            <person name="Neuveglise C."/>
            <person name="Talla E."/>
            <person name="Goffard N."/>
            <person name="Frangeul L."/>
            <person name="Aigle M."/>
            <person name="Anthouard V."/>
            <person name="Babour A."/>
            <person name="Barbe V."/>
            <person name="Barnay S."/>
            <person name="Blanchin S."/>
            <person name="Beckerich J.-M."/>
            <person name="Beyne E."/>
            <person name="Bleykasten C."/>
            <person name="Boisrame A."/>
            <person name="Boyer J."/>
            <person name="Cattolico L."/>
            <person name="Confanioleri F."/>
            <person name="de Daruvar A."/>
            <person name="Despons L."/>
            <person name="Fabre E."/>
            <person name="Fairhead C."/>
            <person name="Ferry-Dumazet H."/>
            <person name="Groppi A."/>
            <person name="Hantraye F."/>
            <person name="Hennequin C."/>
            <person name="Jauniaux N."/>
            <person name="Joyet P."/>
            <person name="Kachouri R."/>
            <person name="Kerrest A."/>
            <person name="Koszul R."/>
            <person name="Lemaire M."/>
            <person name="Lesur I."/>
            <person name="Ma L."/>
            <person name="Muller H."/>
            <person name="Nicaud J.-M."/>
            <person name="Nikolski M."/>
            <person name="Oztas S."/>
            <person name="Ozier-Kalogeropoulos O."/>
            <person name="Pellenz S."/>
            <person name="Potier S."/>
            <person name="Richard G.-F."/>
            <person name="Straub M.-L."/>
            <person name="Suleau A."/>
            <person name="Swennen D."/>
            <person name="Tekaia F."/>
            <person name="Wesolowski-Louvel M."/>
            <person name="Westhof E."/>
            <person name="Wirth B."/>
            <person name="Zeniou-Meyer M."/>
            <person name="Zivanovic Y."/>
            <person name="Bolotin-Fukuhara M."/>
            <person name="Thierry A."/>
            <person name="Bouchier C."/>
            <person name="Caudron B."/>
            <person name="Scarpelli C."/>
            <person name="Gaillardin C."/>
            <person name="Weissenbach J."/>
            <person name="Wincker P."/>
            <person name="Souciet J.-L."/>
        </authorList>
    </citation>
    <scope>NUCLEOTIDE SEQUENCE [LARGE SCALE GENOMIC DNA]</scope>
    <source>
        <strain>ATCC 36239 / CBS 767 / BCRC 21394 / JCM 1990 / NBRC 0083 / IGC 2968</strain>
    </source>
</reference>
<accession>Q6BNU4</accession>
<dbReference type="EMBL" id="CR382137">
    <property type="protein sequence ID" value="CAG88396.2"/>
    <property type="molecule type" value="Genomic_DNA"/>
</dbReference>
<dbReference type="RefSeq" id="XP_460126.2">
    <property type="nucleotide sequence ID" value="XM_460126.1"/>
</dbReference>
<dbReference type="SMR" id="Q6BNU4"/>
<dbReference type="FunCoup" id="Q6BNU4">
    <property type="interactions" value="75"/>
</dbReference>
<dbReference type="GeneID" id="2901900"/>
<dbReference type="KEGG" id="dha:DEHA2E18964g"/>
<dbReference type="VEuPathDB" id="FungiDB:DEHA2E18964g"/>
<dbReference type="eggNOG" id="ENOG502S7CS">
    <property type="taxonomic scope" value="Eukaryota"/>
</dbReference>
<dbReference type="HOGENOM" id="CLU_113770_5_0_1"/>
<dbReference type="InParanoid" id="Q6BNU4"/>
<dbReference type="OMA" id="KTIIECM"/>
<dbReference type="OrthoDB" id="10025739at2759"/>
<dbReference type="Proteomes" id="UP000000599">
    <property type="component" value="Chromosome E"/>
</dbReference>
<dbReference type="GO" id="GO:0000781">
    <property type="term" value="C:chromosome, telomeric region"/>
    <property type="evidence" value="ECO:0007669"/>
    <property type="project" value="UniProtKB-SubCell"/>
</dbReference>
<dbReference type="GO" id="GO:0000408">
    <property type="term" value="C:EKC/KEOPS complex"/>
    <property type="evidence" value="ECO:0007669"/>
    <property type="project" value="TreeGrafter"/>
</dbReference>
<dbReference type="GO" id="GO:0005634">
    <property type="term" value="C:nucleus"/>
    <property type="evidence" value="ECO:0007669"/>
    <property type="project" value="UniProtKB-SubCell"/>
</dbReference>
<dbReference type="GO" id="GO:0008033">
    <property type="term" value="P:tRNA processing"/>
    <property type="evidence" value="ECO:0007669"/>
    <property type="project" value="UniProtKB-KW"/>
</dbReference>
<dbReference type="GO" id="GO:0070525">
    <property type="term" value="P:tRNA threonylcarbamoyladenosine metabolic process"/>
    <property type="evidence" value="ECO:0007669"/>
    <property type="project" value="TreeGrafter"/>
</dbReference>
<dbReference type="Gene3D" id="3.30.310.50">
    <property type="entry name" value="Alpha-D-phosphohexomutase, C-terminal domain"/>
    <property type="match status" value="1"/>
</dbReference>
<dbReference type="InterPro" id="IPR015419">
    <property type="entry name" value="CTAG/Pcc1"/>
</dbReference>
<dbReference type="PANTHER" id="PTHR31283">
    <property type="entry name" value="EKC/KEOPS COMPLEX SUBUNIT PCC1 FAMILY MEMBER"/>
    <property type="match status" value="1"/>
</dbReference>
<dbReference type="PANTHER" id="PTHR31283:SF5">
    <property type="entry name" value="EKC_KEOPS COMPLEX SUBUNIT LAGE3"/>
    <property type="match status" value="1"/>
</dbReference>
<dbReference type="Pfam" id="PF09341">
    <property type="entry name" value="Pcc1"/>
    <property type="match status" value="1"/>
</dbReference>